<organism>
    <name type="scientific">Photobacterium profundum (strain SS9)</name>
    <dbReference type="NCBI Taxonomy" id="298386"/>
    <lineage>
        <taxon>Bacteria</taxon>
        <taxon>Pseudomonadati</taxon>
        <taxon>Pseudomonadota</taxon>
        <taxon>Gammaproteobacteria</taxon>
        <taxon>Vibrionales</taxon>
        <taxon>Vibrionaceae</taxon>
        <taxon>Photobacterium</taxon>
    </lineage>
</organism>
<comment type="function">
    <text evidence="1">This is one of the proteins that binds to the 5S RNA in the ribosome where it forms part of the central protuberance.</text>
</comment>
<comment type="subunit">
    <text evidence="1">Part of the 50S ribosomal subunit; part of the 5S rRNA/L5/L18/L25 subcomplex. Contacts the 5S rRNA. Binds to the 5S rRNA independently of L5 and L18.</text>
</comment>
<comment type="similarity">
    <text evidence="1">Belongs to the bacterial ribosomal protein bL25 family.</text>
</comment>
<comment type="sequence caution" evidence="2">
    <conflict type="erroneous initiation">
        <sequence resource="EMBL-CDS" id="CAG19945"/>
    </conflict>
</comment>
<keyword id="KW-1185">Reference proteome</keyword>
<keyword id="KW-0687">Ribonucleoprotein</keyword>
<keyword id="KW-0689">Ribosomal protein</keyword>
<keyword id="KW-0694">RNA-binding</keyword>
<keyword id="KW-0699">rRNA-binding</keyword>
<name>RL25_PHOPR</name>
<feature type="chain" id="PRO_0000181489" description="Large ribosomal subunit protein bL25">
    <location>
        <begin position="1"/>
        <end position="92"/>
    </location>
</feature>
<reference key="1">
    <citation type="journal article" date="2005" name="Science">
        <title>Life at depth: Photobacterium profundum genome sequence and expression analysis.</title>
        <authorList>
            <person name="Vezzi A."/>
            <person name="Campanaro S."/>
            <person name="D'Angelo M."/>
            <person name="Simonato F."/>
            <person name="Vitulo N."/>
            <person name="Lauro F.M."/>
            <person name="Cestaro A."/>
            <person name="Malacrida G."/>
            <person name="Simionati B."/>
            <person name="Cannata N."/>
            <person name="Romualdi C."/>
            <person name="Bartlett D.H."/>
            <person name="Valle G."/>
        </authorList>
    </citation>
    <scope>NUCLEOTIDE SEQUENCE [LARGE SCALE GENOMIC DNA]</scope>
    <source>
        <strain>ATCC BAA-1253 / SS9</strain>
    </source>
</reference>
<proteinExistence type="inferred from homology"/>
<gene>
    <name evidence="1" type="primary">rplY</name>
    <name type="ordered locus">PBPRA1534</name>
</gene>
<protein>
    <recommendedName>
        <fullName evidence="1">Large ribosomal subunit protein bL25</fullName>
    </recommendedName>
    <alternativeName>
        <fullName evidence="2">50S ribosomal protein L25</fullName>
    </alternativeName>
</protein>
<sequence length="92" mass="10460">MKFNAVVRTDLGKGASRRLRLTEKFPAIIYGGEAAPVAIELLHSDVINQMDKPEFYEGIILVIDGQEVAVKPQDIQRHVFKPKVEHMDFKRV</sequence>
<accession>Q6LRY1</accession>
<evidence type="ECO:0000255" key="1">
    <source>
        <dbReference type="HAMAP-Rule" id="MF_01336"/>
    </source>
</evidence>
<evidence type="ECO:0000305" key="2"/>
<dbReference type="EMBL" id="CR378667">
    <property type="protein sequence ID" value="CAG19945.1"/>
    <property type="status" value="ALT_INIT"/>
    <property type="molecule type" value="Genomic_DNA"/>
</dbReference>
<dbReference type="RefSeq" id="WP_011218266.1">
    <property type="nucleotide sequence ID" value="NC_006370.1"/>
</dbReference>
<dbReference type="SMR" id="Q6LRY1"/>
<dbReference type="STRING" id="298386.PBPRA1534"/>
<dbReference type="KEGG" id="ppr:PBPRA1534"/>
<dbReference type="eggNOG" id="COG1825">
    <property type="taxonomic scope" value="Bacteria"/>
</dbReference>
<dbReference type="HOGENOM" id="CLU_137946_0_0_6"/>
<dbReference type="Proteomes" id="UP000000593">
    <property type="component" value="Chromosome 1"/>
</dbReference>
<dbReference type="GO" id="GO:0022625">
    <property type="term" value="C:cytosolic large ribosomal subunit"/>
    <property type="evidence" value="ECO:0007669"/>
    <property type="project" value="TreeGrafter"/>
</dbReference>
<dbReference type="GO" id="GO:0008097">
    <property type="term" value="F:5S rRNA binding"/>
    <property type="evidence" value="ECO:0007669"/>
    <property type="project" value="InterPro"/>
</dbReference>
<dbReference type="GO" id="GO:0003735">
    <property type="term" value="F:structural constituent of ribosome"/>
    <property type="evidence" value="ECO:0007669"/>
    <property type="project" value="InterPro"/>
</dbReference>
<dbReference type="GO" id="GO:0006412">
    <property type="term" value="P:translation"/>
    <property type="evidence" value="ECO:0007669"/>
    <property type="project" value="UniProtKB-UniRule"/>
</dbReference>
<dbReference type="CDD" id="cd00495">
    <property type="entry name" value="Ribosomal_L25_TL5_CTC"/>
    <property type="match status" value="1"/>
</dbReference>
<dbReference type="FunFam" id="2.40.240.10:FF:000002">
    <property type="entry name" value="50S ribosomal protein L25"/>
    <property type="match status" value="1"/>
</dbReference>
<dbReference type="Gene3D" id="2.40.240.10">
    <property type="entry name" value="Ribosomal Protein L25, Chain P"/>
    <property type="match status" value="1"/>
</dbReference>
<dbReference type="HAMAP" id="MF_01336">
    <property type="entry name" value="Ribosomal_bL25"/>
    <property type="match status" value="1"/>
</dbReference>
<dbReference type="InterPro" id="IPR020056">
    <property type="entry name" value="Rbsml_bL25/Gln-tRNA_synth_N"/>
</dbReference>
<dbReference type="InterPro" id="IPR011035">
    <property type="entry name" value="Ribosomal_bL25/Gln-tRNA_synth"/>
</dbReference>
<dbReference type="InterPro" id="IPR020055">
    <property type="entry name" value="Ribosomal_bL25_short"/>
</dbReference>
<dbReference type="InterPro" id="IPR029751">
    <property type="entry name" value="Ribosomal_L25_dom"/>
</dbReference>
<dbReference type="InterPro" id="IPR020930">
    <property type="entry name" value="Ribosomal_uL5_bac-type"/>
</dbReference>
<dbReference type="NCBIfam" id="NF004612">
    <property type="entry name" value="PRK05943.1"/>
    <property type="match status" value="1"/>
</dbReference>
<dbReference type="PANTHER" id="PTHR33284">
    <property type="entry name" value="RIBOSOMAL PROTEIN L25/GLN-TRNA SYNTHETASE, ANTI-CODON-BINDING DOMAIN-CONTAINING PROTEIN"/>
    <property type="match status" value="1"/>
</dbReference>
<dbReference type="PANTHER" id="PTHR33284:SF1">
    <property type="entry name" value="RIBOSOMAL PROTEIN L25_GLN-TRNA SYNTHETASE, ANTI-CODON-BINDING DOMAIN-CONTAINING PROTEIN"/>
    <property type="match status" value="1"/>
</dbReference>
<dbReference type="Pfam" id="PF01386">
    <property type="entry name" value="Ribosomal_L25p"/>
    <property type="match status" value="1"/>
</dbReference>
<dbReference type="SUPFAM" id="SSF50715">
    <property type="entry name" value="Ribosomal protein L25-like"/>
    <property type="match status" value="1"/>
</dbReference>